<evidence type="ECO:0000255" key="1">
    <source>
        <dbReference type="HAMAP-Rule" id="MF_00356"/>
    </source>
</evidence>
<reference key="1">
    <citation type="journal article" date="2007" name="J. Bacteriol.">
        <title>Complete genome of acute rheumatic fever-associated serotype M5 Streptococcus pyogenes strain Manfredo.</title>
        <authorList>
            <person name="Holden M.T.G."/>
            <person name="Scott A."/>
            <person name="Cherevach I."/>
            <person name="Chillingworth T."/>
            <person name="Churcher C."/>
            <person name="Cronin A."/>
            <person name="Dowd L."/>
            <person name="Feltwell T."/>
            <person name="Hamlin N."/>
            <person name="Holroyd S."/>
            <person name="Jagels K."/>
            <person name="Moule S."/>
            <person name="Mungall K."/>
            <person name="Quail M.A."/>
            <person name="Price C."/>
            <person name="Rabbinowitsch E."/>
            <person name="Sharp S."/>
            <person name="Skelton J."/>
            <person name="Whitehead S."/>
            <person name="Barrell B.G."/>
            <person name="Kehoe M."/>
            <person name="Parkhill J."/>
        </authorList>
    </citation>
    <scope>NUCLEOTIDE SEQUENCE [LARGE SCALE GENOMIC DNA]</scope>
    <source>
        <strain>Manfredo</strain>
    </source>
</reference>
<comment type="function">
    <text evidence="1">Required for replicative DNA synthesis. This DNA polymerase also exhibits 3' to 5' exonuclease activity.</text>
</comment>
<comment type="catalytic activity">
    <reaction evidence="1">
        <text>DNA(n) + a 2'-deoxyribonucleoside 5'-triphosphate = DNA(n+1) + diphosphate</text>
        <dbReference type="Rhea" id="RHEA:22508"/>
        <dbReference type="Rhea" id="RHEA-COMP:17339"/>
        <dbReference type="Rhea" id="RHEA-COMP:17340"/>
        <dbReference type="ChEBI" id="CHEBI:33019"/>
        <dbReference type="ChEBI" id="CHEBI:61560"/>
        <dbReference type="ChEBI" id="CHEBI:173112"/>
        <dbReference type="EC" id="2.7.7.7"/>
    </reaction>
</comment>
<comment type="subcellular location">
    <subcellularLocation>
        <location evidence="1">Cytoplasm</location>
    </subcellularLocation>
</comment>
<comment type="similarity">
    <text evidence="1">Belongs to the DNA polymerase type-C family. PolC subfamily.</text>
</comment>
<keyword id="KW-0963">Cytoplasm</keyword>
<keyword id="KW-0235">DNA replication</keyword>
<keyword id="KW-0239">DNA-directed DNA polymerase</keyword>
<keyword id="KW-0269">Exonuclease</keyword>
<keyword id="KW-0378">Hydrolase</keyword>
<keyword id="KW-0540">Nuclease</keyword>
<keyword id="KW-0548">Nucleotidyltransferase</keyword>
<keyword id="KW-0808">Transferase</keyword>
<accession>A2RGI3</accession>
<name>DPO3_STRPG</name>
<protein>
    <recommendedName>
        <fullName evidence="1">DNA polymerase III PolC-type</fullName>
        <shortName evidence="1">PolIII</shortName>
        <ecNumber evidence="1">2.7.7.7</ecNumber>
    </recommendedName>
</protein>
<feature type="chain" id="PRO_1000048488" description="DNA polymerase III PolC-type">
    <location>
        <begin position="1"/>
        <end position="1465"/>
    </location>
</feature>
<feature type="domain" description="Exonuclease">
    <location>
        <begin position="427"/>
        <end position="583"/>
    </location>
</feature>
<dbReference type="EC" id="2.7.7.7" evidence="1"/>
<dbReference type="EMBL" id="AM295007">
    <property type="protein sequence ID" value="CAM30965.1"/>
    <property type="molecule type" value="Genomic_DNA"/>
</dbReference>
<dbReference type="RefSeq" id="WP_011889165.1">
    <property type="nucleotide sequence ID" value="NC_009332.1"/>
</dbReference>
<dbReference type="SMR" id="A2RGI3"/>
<dbReference type="KEGG" id="spf:SpyM51644"/>
<dbReference type="HOGENOM" id="CLU_003297_2_0_9"/>
<dbReference type="GO" id="GO:0005737">
    <property type="term" value="C:cytoplasm"/>
    <property type="evidence" value="ECO:0007669"/>
    <property type="project" value="UniProtKB-SubCell"/>
</dbReference>
<dbReference type="GO" id="GO:0008408">
    <property type="term" value="F:3'-5' exonuclease activity"/>
    <property type="evidence" value="ECO:0007669"/>
    <property type="project" value="UniProtKB-UniRule"/>
</dbReference>
<dbReference type="GO" id="GO:0003677">
    <property type="term" value="F:DNA binding"/>
    <property type="evidence" value="ECO:0007669"/>
    <property type="project" value="UniProtKB-UniRule"/>
</dbReference>
<dbReference type="GO" id="GO:0003887">
    <property type="term" value="F:DNA-directed DNA polymerase activity"/>
    <property type="evidence" value="ECO:0007669"/>
    <property type="project" value="UniProtKB-UniRule"/>
</dbReference>
<dbReference type="GO" id="GO:0006261">
    <property type="term" value="P:DNA-templated DNA replication"/>
    <property type="evidence" value="ECO:0007669"/>
    <property type="project" value="UniProtKB-UniRule"/>
</dbReference>
<dbReference type="CDD" id="cd06127">
    <property type="entry name" value="DEDDh"/>
    <property type="match status" value="1"/>
</dbReference>
<dbReference type="CDD" id="cd07435">
    <property type="entry name" value="PHP_PolIIIA_POLC"/>
    <property type="match status" value="1"/>
</dbReference>
<dbReference type="CDD" id="cd04484">
    <property type="entry name" value="polC_OBF"/>
    <property type="match status" value="1"/>
</dbReference>
<dbReference type="FunFam" id="3.30.420.10:FF:000045">
    <property type="entry name" value="3'-5' exonuclease DinG"/>
    <property type="match status" value="1"/>
</dbReference>
<dbReference type="Gene3D" id="1.10.150.870">
    <property type="match status" value="1"/>
</dbReference>
<dbReference type="Gene3D" id="3.30.1900.20">
    <property type="match status" value="1"/>
</dbReference>
<dbReference type="Gene3D" id="6.10.140.1510">
    <property type="match status" value="1"/>
</dbReference>
<dbReference type="Gene3D" id="3.20.20.140">
    <property type="entry name" value="Metal-dependent hydrolases"/>
    <property type="match status" value="1"/>
</dbReference>
<dbReference type="Gene3D" id="2.40.50.140">
    <property type="entry name" value="Nucleic acid-binding proteins"/>
    <property type="match status" value="1"/>
</dbReference>
<dbReference type="Gene3D" id="1.10.150.700">
    <property type="entry name" value="PolC, middle finger domain"/>
    <property type="match status" value="1"/>
</dbReference>
<dbReference type="Gene3D" id="3.30.420.10">
    <property type="entry name" value="Ribonuclease H-like superfamily/Ribonuclease H"/>
    <property type="match status" value="1"/>
</dbReference>
<dbReference type="HAMAP" id="MF_00356">
    <property type="entry name" value="DNApol_PolC"/>
    <property type="match status" value="1"/>
</dbReference>
<dbReference type="InterPro" id="IPR011708">
    <property type="entry name" value="DNA_pol3_alpha_NTPase_dom"/>
</dbReference>
<dbReference type="InterPro" id="IPR040982">
    <property type="entry name" value="DNA_pol3_finger"/>
</dbReference>
<dbReference type="InterPro" id="IPR024754">
    <property type="entry name" value="DNA_PolC-like_N_II"/>
</dbReference>
<dbReference type="InterPro" id="IPR028112">
    <property type="entry name" value="DNA_PolC-type_N_I"/>
</dbReference>
<dbReference type="InterPro" id="IPR004805">
    <property type="entry name" value="DnaE2/DnaE/PolC"/>
</dbReference>
<dbReference type="InterPro" id="IPR029460">
    <property type="entry name" value="DNAPol_HHH"/>
</dbReference>
<dbReference type="InterPro" id="IPR006054">
    <property type="entry name" value="DnaQ"/>
</dbReference>
<dbReference type="InterPro" id="IPR013520">
    <property type="entry name" value="Exonuclease_RNaseT/DNA_pol3"/>
</dbReference>
<dbReference type="InterPro" id="IPR012340">
    <property type="entry name" value="NA-bd_OB-fold"/>
</dbReference>
<dbReference type="InterPro" id="IPR004013">
    <property type="entry name" value="PHP_dom"/>
</dbReference>
<dbReference type="InterPro" id="IPR003141">
    <property type="entry name" value="Pol/His_phosphatase_N"/>
</dbReference>
<dbReference type="InterPro" id="IPR016195">
    <property type="entry name" value="Pol/histidinol_Pase-like"/>
</dbReference>
<dbReference type="InterPro" id="IPR006308">
    <property type="entry name" value="Pol_III_a_PolC-type_gram_pos"/>
</dbReference>
<dbReference type="InterPro" id="IPR044923">
    <property type="entry name" value="PolC_middle_finger_sf"/>
</dbReference>
<dbReference type="InterPro" id="IPR012337">
    <property type="entry name" value="RNaseH-like_sf"/>
</dbReference>
<dbReference type="InterPro" id="IPR036397">
    <property type="entry name" value="RNaseH_sf"/>
</dbReference>
<dbReference type="NCBIfam" id="TIGR00573">
    <property type="entry name" value="dnaq"/>
    <property type="match status" value="1"/>
</dbReference>
<dbReference type="NCBIfam" id="TIGR01405">
    <property type="entry name" value="polC_Gram_pos"/>
    <property type="match status" value="1"/>
</dbReference>
<dbReference type="NCBIfam" id="NF001688">
    <property type="entry name" value="PRK00448.1"/>
    <property type="match status" value="1"/>
</dbReference>
<dbReference type="PANTHER" id="PTHR32294:SF5">
    <property type="entry name" value="DNA POLYMERASE III POLC-TYPE"/>
    <property type="match status" value="1"/>
</dbReference>
<dbReference type="PANTHER" id="PTHR32294">
    <property type="entry name" value="DNA POLYMERASE III SUBUNIT ALPHA"/>
    <property type="match status" value="1"/>
</dbReference>
<dbReference type="Pfam" id="PF14480">
    <property type="entry name" value="DNA_pol3_a_NI"/>
    <property type="match status" value="1"/>
</dbReference>
<dbReference type="Pfam" id="PF11490">
    <property type="entry name" value="DNA_pol3_a_NII"/>
    <property type="match status" value="1"/>
</dbReference>
<dbReference type="Pfam" id="PF07733">
    <property type="entry name" value="DNA_pol3_alpha"/>
    <property type="match status" value="2"/>
</dbReference>
<dbReference type="Pfam" id="PF17657">
    <property type="entry name" value="DNA_pol3_finger"/>
    <property type="match status" value="1"/>
</dbReference>
<dbReference type="Pfam" id="PF14579">
    <property type="entry name" value="HHH_6"/>
    <property type="match status" value="1"/>
</dbReference>
<dbReference type="Pfam" id="PF02811">
    <property type="entry name" value="PHP"/>
    <property type="match status" value="2"/>
</dbReference>
<dbReference type="Pfam" id="PF00929">
    <property type="entry name" value="RNase_T"/>
    <property type="match status" value="1"/>
</dbReference>
<dbReference type="SMART" id="SM00479">
    <property type="entry name" value="EXOIII"/>
    <property type="match status" value="1"/>
</dbReference>
<dbReference type="SMART" id="SM00481">
    <property type="entry name" value="POLIIIAc"/>
    <property type="match status" value="1"/>
</dbReference>
<dbReference type="SUPFAM" id="SSF50249">
    <property type="entry name" value="Nucleic acid-binding proteins"/>
    <property type="match status" value="1"/>
</dbReference>
<dbReference type="SUPFAM" id="SSF89550">
    <property type="entry name" value="PHP domain-like"/>
    <property type="match status" value="1"/>
</dbReference>
<dbReference type="SUPFAM" id="SSF53098">
    <property type="entry name" value="Ribonuclease H-like"/>
    <property type="match status" value="1"/>
</dbReference>
<sequence>MSDLFAKLMDQIEMPLDMRRSSAFSSADIIEVKVHSVSRLWEFHFAFAAVLPIATYRELHDRLIRTFEAADIKVTFDIQAAQVDYSDDLLQAYYQEAFEHAPCNSASFKSSFSKLKVTYENDKLIIAAPRFVNNDHFRKNHLPNLVKQLEAFGFGTLTIDMVSDQEMTEHLTKDFVSSRQALVKKAVQDNLEAQKSLEAMMPPVEEATPAPKFDYKERAAKRQAGFEKATITPMIEIETEENRIVFEGMVFDVERKTTRTGRHIINFKMTDYTSSFALQKWAKDDEELRKFDMIAKGAWLRVQGNIETNPFTKSLTMNVQQVKEIVHHERKDLMPEGQKRVELHAHTNMSTMDALPTVESLIDTAAKWGHKAVAITDHANVQSFPHGYHRARKAGIKAIFGLEANIVEDKAPISYDPVDMDLHEATYVVFDVETTGLSAMNNDLIQIAASKMFKGNIVEQFDEFIDPGHPLSAFTTELTGITDKHLQGAKPLVTVLKAFQDFCKDSILVAHNASFDVGFMNANYERHDLPKITQPVIDTLEFARNLYPEYKRHGLGPLTKRFQVSLDHHHMANYDAEATGRLLFIFLRDAREKHGIKNLLQLNTDLVAEDSYKKARIKHATIYVQNQVGLKNMFKLVSLSNIKYFEGVPRIPRTVLDAHREGLLLGTACSDGEVFDAVLTKGIDAAVDLAKYYDFIEIMPPAIYQPLVVRELIKDQAGIEQVIRDLIEVGKRANKPVLATGNVHYLEPEEEIYREIIVRSLGQGAMINRTIGRGEGAQPAPLPKAHFRTTNEMLDEFAFLGKDLAYQVVVENTQDFADRIEEVEVVKGDLYTPYIDKAEETVAELTYQKAFEIYGNPLPDIIDLRIEKELTSILGNGFAVIYLASQMLVNRSNERGYLVGSRGSVGSSFVATMIGITEVNPMPPHYVCPSCQHSEFITDGSVGSGYDLPNKPCPKCGTPYQKDGQDIPFETFLGFDGDKVPDIDLNFSGDDQPSAHLDVRDIFGDEYAFRAGTVGTVAEKTAYGFVKGYERDYGKFYRDAEVDRLAAGAAGVKRTTGQHPGGIVVIPNYMDVYDFTPVQYPADDVTASWQTTHFNFHDIDENVLKLDILGHDDPTMIRKLQDLSGIDPITIPADDPGVMALFSGTEILGVTPEQIGTPTGMLGIPEFGTNFVRGMVNETHPTTFAELLQLSGLSHGTDVWLGNAQDLIKEGVATLKTVIGCRDDIMVYLMHAGLEPKMAFTIMERVRKGLWLKISEEERNGYIDAMRENNVPDWYIESCGKIKYMFPKAHAAAYVLMALRVAYFKVHHPIMYYCAYFSIRAKAFELKTMSDGLDAVKARMEDITIKRKNNEATNVENDLFTTLEIVNEMLERGFKFGKLDLYKSDAIEFQIKGDTLIPPFIALEGLGENVAKQIVKARQEGEFLSKMELRKRGGASSTLVEKMDEMGILGNMPEDNQLSLFDDFF</sequence>
<gene>
    <name evidence="1" type="primary">polC</name>
    <name type="ordered locus">SpyM51644</name>
</gene>
<proteinExistence type="inferred from homology"/>
<organism>
    <name type="scientific">Streptococcus pyogenes serotype M5 (strain Manfredo)</name>
    <dbReference type="NCBI Taxonomy" id="160491"/>
    <lineage>
        <taxon>Bacteria</taxon>
        <taxon>Bacillati</taxon>
        <taxon>Bacillota</taxon>
        <taxon>Bacilli</taxon>
        <taxon>Lactobacillales</taxon>
        <taxon>Streptococcaceae</taxon>
        <taxon>Streptococcus</taxon>
    </lineage>
</organism>